<evidence type="ECO:0000255" key="1">
    <source>
        <dbReference type="HAMAP-Rule" id="MF_00228"/>
    </source>
</evidence>
<feature type="chain" id="PRO_0000156935" description="Hydroxyethylthiazole kinase">
    <location>
        <begin position="1"/>
        <end position="262"/>
    </location>
</feature>
<feature type="binding site" evidence="1">
    <location>
        <position position="50"/>
    </location>
    <ligand>
        <name>substrate</name>
    </ligand>
</feature>
<feature type="binding site" evidence="1">
    <location>
        <position position="125"/>
    </location>
    <ligand>
        <name>ATP</name>
        <dbReference type="ChEBI" id="CHEBI:30616"/>
    </ligand>
</feature>
<feature type="binding site" evidence="1">
    <location>
        <position position="171"/>
    </location>
    <ligand>
        <name>ATP</name>
        <dbReference type="ChEBI" id="CHEBI:30616"/>
    </ligand>
</feature>
<feature type="binding site" evidence="1">
    <location>
        <position position="198"/>
    </location>
    <ligand>
        <name>substrate</name>
    </ligand>
</feature>
<comment type="function">
    <text evidence="1">Catalyzes the phosphorylation of the hydroxyl group of 4-methyl-5-beta-hydroxyethylthiazole (THZ).</text>
</comment>
<comment type="catalytic activity">
    <reaction evidence="1">
        <text>5-(2-hydroxyethyl)-4-methylthiazole + ATP = 4-methyl-5-(2-phosphooxyethyl)-thiazole + ADP + H(+)</text>
        <dbReference type="Rhea" id="RHEA:24212"/>
        <dbReference type="ChEBI" id="CHEBI:15378"/>
        <dbReference type="ChEBI" id="CHEBI:17957"/>
        <dbReference type="ChEBI" id="CHEBI:30616"/>
        <dbReference type="ChEBI" id="CHEBI:58296"/>
        <dbReference type="ChEBI" id="CHEBI:456216"/>
        <dbReference type="EC" id="2.7.1.50"/>
    </reaction>
</comment>
<comment type="cofactor">
    <cofactor evidence="1">
        <name>Mg(2+)</name>
        <dbReference type="ChEBI" id="CHEBI:18420"/>
    </cofactor>
</comment>
<comment type="pathway">
    <text evidence="1">Cofactor biosynthesis; thiamine diphosphate biosynthesis; 4-methyl-5-(2-phosphoethyl)-thiazole from 5-(2-hydroxyethyl)-4-methylthiazole: step 1/1.</text>
</comment>
<comment type="similarity">
    <text evidence="1">Belongs to the Thz kinase family.</text>
</comment>
<sequence>MQVDLLSSAQSAHTLHLFHQHSPLVHCMTNDVVQTFTANTLLALGASPAMVIETEEASQFAAIASALLINVGTLTQPRAQAMRAAVEQAKSSQTPWTLDPVAVGALDYRRHFCHELLSFKPAAIRGNASEIMALAGVANGGRGVDTTDAAVNAIPAAQTLARETGAIVVVTGEVDYVTDGHRAVGIHGGDPLMTKVVGTGCALSAVVAACCALPGDMLENVASACHWMKQAGERAVARSEGPGSFVPHFLDALWQLTQEVQA</sequence>
<gene>
    <name evidence="1" type="primary">thiM</name>
    <name type="ordered locus">Z3268</name>
    <name type="ordered locus">ECs2907</name>
</gene>
<name>THIM_ECO57</name>
<keyword id="KW-0067">ATP-binding</keyword>
<keyword id="KW-0418">Kinase</keyword>
<keyword id="KW-0460">Magnesium</keyword>
<keyword id="KW-0479">Metal-binding</keyword>
<keyword id="KW-0547">Nucleotide-binding</keyword>
<keyword id="KW-1185">Reference proteome</keyword>
<keyword id="KW-0784">Thiamine biosynthesis</keyword>
<keyword id="KW-0808">Transferase</keyword>
<proteinExistence type="inferred from homology"/>
<accession>Q8X7G3</accession>
<reference key="1">
    <citation type="journal article" date="2001" name="Nature">
        <title>Genome sequence of enterohaemorrhagic Escherichia coli O157:H7.</title>
        <authorList>
            <person name="Perna N.T."/>
            <person name="Plunkett G. III"/>
            <person name="Burland V."/>
            <person name="Mau B."/>
            <person name="Glasner J.D."/>
            <person name="Rose D.J."/>
            <person name="Mayhew G.F."/>
            <person name="Evans P.S."/>
            <person name="Gregor J."/>
            <person name="Kirkpatrick H.A."/>
            <person name="Posfai G."/>
            <person name="Hackett J."/>
            <person name="Klink S."/>
            <person name="Boutin A."/>
            <person name="Shao Y."/>
            <person name="Miller L."/>
            <person name="Grotbeck E.J."/>
            <person name="Davis N.W."/>
            <person name="Lim A."/>
            <person name="Dimalanta E.T."/>
            <person name="Potamousis K."/>
            <person name="Apodaca J."/>
            <person name="Anantharaman T.S."/>
            <person name="Lin J."/>
            <person name="Yen G."/>
            <person name="Schwartz D.C."/>
            <person name="Welch R.A."/>
            <person name="Blattner F.R."/>
        </authorList>
    </citation>
    <scope>NUCLEOTIDE SEQUENCE [LARGE SCALE GENOMIC DNA]</scope>
    <source>
        <strain>O157:H7 / EDL933 / ATCC 700927 / EHEC</strain>
    </source>
</reference>
<reference key="2">
    <citation type="journal article" date="2001" name="DNA Res.">
        <title>Complete genome sequence of enterohemorrhagic Escherichia coli O157:H7 and genomic comparison with a laboratory strain K-12.</title>
        <authorList>
            <person name="Hayashi T."/>
            <person name="Makino K."/>
            <person name="Ohnishi M."/>
            <person name="Kurokawa K."/>
            <person name="Ishii K."/>
            <person name="Yokoyama K."/>
            <person name="Han C.-G."/>
            <person name="Ohtsubo E."/>
            <person name="Nakayama K."/>
            <person name="Murata T."/>
            <person name="Tanaka M."/>
            <person name="Tobe T."/>
            <person name="Iida T."/>
            <person name="Takami H."/>
            <person name="Honda T."/>
            <person name="Sasakawa C."/>
            <person name="Ogasawara N."/>
            <person name="Yasunaga T."/>
            <person name="Kuhara S."/>
            <person name="Shiba T."/>
            <person name="Hattori M."/>
            <person name="Shinagawa H."/>
        </authorList>
    </citation>
    <scope>NUCLEOTIDE SEQUENCE [LARGE SCALE GENOMIC DNA]</scope>
    <source>
        <strain>O157:H7 / Sakai / RIMD 0509952 / EHEC</strain>
    </source>
</reference>
<protein>
    <recommendedName>
        <fullName evidence="1">Hydroxyethylthiazole kinase</fullName>
        <ecNumber evidence="1">2.7.1.50</ecNumber>
    </recommendedName>
    <alternativeName>
        <fullName evidence="1">4-methyl-5-beta-hydroxyethylthiazole kinase</fullName>
        <shortName evidence="1">TH kinase</shortName>
        <shortName evidence="1">Thz kinase</shortName>
    </alternativeName>
</protein>
<organism>
    <name type="scientific">Escherichia coli O157:H7</name>
    <dbReference type="NCBI Taxonomy" id="83334"/>
    <lineage>
        <taxon>Bacteria</taxon>
        <taxon>Pseudomonadati</taxon>
        <taxon>Pseudomonadota</taxon>
        <taxon>Gammaproteobacteria</taxon>
        <taxon>Enterobacterales</taxon>
        <taxon>Enterobacteriaceae</taxon>
        <taxon>Escherichia</taxon>
    </lineage>
</organism>
<dbReference type="EC" id="2.7.1.50" evidence="1"/>
<dbReference type="EMBL" id="AE005174">
    <property type="protein sequence ID" value="AAG57161.1"/>
    <property type="molecule type" value="Genomic_DNA"/>
</dbReference>
<dbReference type="EMBL" id="BA000007">
    <property type="protein sequence ID" value="BAB36330.1"/>
    <property type="molecule type" value="Genomic_DNA"/>
</dbReference>
<dbReference type="PIR" id="C90992">
    <property type="entry name" value="C90992"/>
</dbReference>
<dbReference type="PIR" id="E85837">
    <property type="entry name" value="E85837"/>
</dbReference>
<dbReference type="RefSeq" id="NP_310934.1">
    <property type="nucleotide sequence ID" value="NC_002695.1"/>
</dbReference>
<dbReference type="RefSeq" id="WP_001195634.1">
    <property type="nucleotide sequence ID" value="NZ_VOAI01000013.1"/>
</dbReference>
<dbReference type="SMR" id="Q8X7G3"/>
<dbReference type="STRING" id="155864.Z3268"/>
<dbReference type="GeneID" id="916610"/>
<dbReference type="KEGG" id="ece:Z3268"/>
<dbReference type="KEGG" id="ecs:ECs_2907"/>
<dbReference type="PATRIC" id="fig|386585.9.peg.3039"/>
<dbReference type="eggNOG" id="COG2145">
    <property type="taxonomic scope" value="Bacteria"/>
</dbReference>
<dbReference type="HOGENOM" id="CLU_019943_0_1_6"/>
<dbReference type="OMA" id="KRPLVHN"/>
<dbReference type="UniPathway" id="UPA00060">
    <property type="reaction ID" value="UER00139"/>
</dbReference>
<dbReference type="Proteomes" id="UP000000558">
    <property type="component" value="Chromosome"/>
</dbReference>
<dbReference type="Proteomes" id="UP000002519">
    <property type="component" value="Chromosome"/>
</dbReference>
<dbReference type="GO" id="GO:0005524">
    <property type="term" value="F:ATP binding"/>
    <property type="evidence" value="ECO:0007669"/>
    <property type="project" value="UniProtKB-UniRule"/>
</dbReference>
<dbReference type="GO" id="GO:0004417">
    <property type="term" value="F:hydroxyethylthiazole kinase activity"/>
    <property type="evidence" value="ECO:0007669"/>
    <property type="project" value="UniProtKB-UniRule"/>
</dbReference>
<dbReference type="GO" id="GO:0000287">
    <property type="term" value="F:magnesium ion binding"/>
    <property type="evidence" value="ECO:0007669"/>
    <property type="project" value="UniProtKB-UniRule"/>
</dbReference>
<dbReference type="GO" id="GO:0009228">
    <property type="term" value="P:thiamine biosynthetic process"/>
    <property type="evidence" value="ECO:0007669"/>
    <property type="project" value="UniProtKB-KW"/>
</dbReference>
<dbReference type="GO" id="GO:0009229">
    <property type="term" value="P:thiamine diphosphate biosynthetic process"/>
    <property type="evidence" value="ECO:0007669"/>
    <property type="project" value="UniProtKB-UniRule"/>
</dbReference>
<dbReference type="CDD" id="cd01170">
    <property type="entry name" value="THZ_kinase"/>
    <property type="match status" value="1"/>
</dbReference>
<dbReference type="FunFam" id="3.40.1190.20:FF:000015">
    <property type="entry name" value="Hydroxyethylthiazole kinase"/>
    <property type="match status" value="1"/>
</dbReference>
<dbReference type="Gene3D" id="3.40.1190.20">
    <property type="match status" value="1"/>
</dbReference>
<dbReference type="HAMAP" id="MF_00228">
    <property type="entry name" value="Thz_kinase"/>
    <property type="match status" value="1"/>
</dbReference>
<dbReference type="InterPro" id="IPR000417">
    <property type="entry name" value="Hyethyz_kinase"/>
</dbReference>
<dbReference type="InterPro" id="IPR029056">
    <property type="entry name" value="Ribokinase-like"/>
</dbReference>
<dbReference type="NCBIfam" id="NF006830">
    <property type="entry name" value="PRK09355.1"/>
    <property type="match status" value="1"/>
</dbReference>
<dbReference type="NCBIfam" id="TIGR00694">
    <property type="entry name" value="thiM"/>
    <property type="match status" value="1"/>
</dbReference>
<dbReference type="Pfam" id="PF02110">
    <property type="entry name" value="HK"/>
    <property type="match status" value="1"/>
</dbReference>
<dbReference type="PIRSF" id="PIRSF000513">
    <property type="entry name" value="Thz_kinase"/>
    <property type="match status" value="1"/>
</dbReference>
<dbReference type="PRINTS" id="PR01099">
    <property type="entry name" value="HYETHTZKNASE"/>
</dbReference>
<dbReference type="SUPFAM" id="SSF53613">
    <property type="entry name" value="Ribokinase-like"/>
    <property type="match status" value="1"/>
</dbReference>